<keyword id="KW-0961">Cell wall biogenesis/degradation</keyword>
<keyword id="KW-1015">Disulfide bond</keyword>
<keyword id="KW-0325">Glycoprotein</keyword>
<keyword id="KW-0479">Metal-binding</keyword>
<keyword id="KW-0964">Secreted</keyword>
<keyword id="KW-0732">Signal</keyword>
<keyword id="KW-0926">Vacuole</keyword>
<keyword id="KW-0862">Zinc</keyword>
<sequence>MHFSVRLSLFLTLASSLPLVSAVPQHEDQAYTFSSSGRSATTDTDPALDVRQETLRTPSAWTRLRDSLVESVWGLPQRSEGCESRPRNRAKTVSRAPATLQARYGEDVVLRFTIKNQEEVKALVEASNILFLDVWGSHDDWVDIRLSRDVIPSLLGLLPPSLQTSHVPLIRDLAQTIYESYPKAGSAPPSQQGPTTRRFSPSASTSKSKPHEAKNIFFQDYQPLSVLLPWMRLLVSMFSSHTTLISVGTTAEGRDIPALRVGVHPTNNAQQAPRRRTIVISGGTHAREWISVSTVSYIAYSFITGYGKSKSITKLLEQFDYVFIPTVNPDGYAYTFSTDRLWRKNRQQTSLSFCPGIDLDHSWGYEWDGNATRSNPCSESYAGDQPFEAVEAREIASWARNEVTVNNVHFVAFVDLHSYSQQILYPYGHSCAHLPANLENLEELGAGLAKAIRKSSRENYDVKAACRGIVASCTGDKDADEPVTSSALERTAGSALDWFFHDLDVRFSYQIKLRDRGSYGFLLPREHIVPTGKEIYRAMVAMGKFLVSPHVLEEDIDGLRASEEPQDYDNDLEDGEDDKDEQDSTVFRAQADDLQS</sequence>
<reference key="1">
    <citation type="journal article" date="2011" name="Genome Biol.">
        <title>Comparative and functional genomics provide insights into the pathogenicity of dermatophytic fungi.</title>
        <authorList>
            <person name="Burmester A."/>
            <person name="Shelest E."/>
            <person name="Gloeckner G."/>
            <person name="Heddergott C."/>
            <person name="Schindler S."/>
            <person name="Staib P."/>
            <person name="Heidel A."/>
            <person name="Felder M."/>
            <person name="Petzold A."/>
            <person name="Szafranski K."/>
            <person name="Feuermann M."/>
            <person name="Pedruzzi I."/>
            <person name="Priebe S."/>
            <person name="Groth M."/>
            <person name="Winkler R."/>
            <person name="Li W."/>
            <person name="Kniemeyer O."/>
            <person name="Schroeckh V."/>
            <person name="Hertweck C."/>
            <person name="Hube B."/>
            <person name="White T.C."/>
            <person name="Platzer M."/>
            <person name="Guthke R."/>
            <person name="Heitman J."/>
            <person name="Woestemeyer J."/>
            <person name="Zipfel P.F."/>
            <person name="Monod M."/>
            <person name="Brakhage A.A."/>
        </authorList>
    </citation>
    <scope>NUCLEOTIDE SEQUENCE [LARGE SCALE GENOMIC DNA]</scope>
    <source>
        <strain>HKI 0517</strain>
    </source>
</reference>
<feature type="signal peptide" evidence="4">
    <location>
        <begin position="1"/>
        <end position="22"/>
    </location>
</feature>
<feature type="propeptide" id="PRO_0000453253" evidence="3">
    <location>
        <begin position="23"/>
        <end position="184"/>
    </location>
</feature>
<feature type="chain" id="PRO_0000411192" description="Inactive metallocarboxypeptidase ECM14">
    <location>
        <begin position="185"/>
        <end position="596"/>
    </location>
</feature>
<feature type="domain" description="Peptidase M14" evidence="5">
    <location>
        <begin position="220"/>
        <end position="546"/>
    </location>
</feature>
<feature type="region of interest" description="Disordered" evidence="6">
    <location>
        <begin position="181"/>
        <end position="210"/>
    </location>
</feature>
<feature type="region of interest" description="Disordered" evidence="6">
    <location>
        <begin position="557"/>
        <end position="596"/>
    </location>
</feature>
<feature type="compositionally biased region" description="Polar residues" evidence="6">
    <location>
        <begin position="188"/>
        <end position="207"/>
    </location>
</feature>
<feature type="compositionally biased region" description="Acidic residues" evidence="6">
    <location>
        <begin position="564"/>
        <end position="583"/>
    </location>
</feature>
<feature type="binding site" evidence="1">
    <location>
        <begin position="285"/>
        <end position="288"/>
    </location>
    <ligand>
        <name>substrate</name>
    </ligand>
</feature>
<feature type="binding site" evidence="5">
    <location>
        <position position="285"/>
    </location>
    <ligand>
        <name>Zn(2+)</name>
        <dbReference type="ChEBI" id="CHEBI:29105"/>
        <note>catalytic</note>
    </ligand>
</feature>
<feature type="binding site" evidence="5">
    <location>
        <position position="288"/>
    </location>
    <ligand>
        <name>Zn(2+)</name>
        <dbReference type="ChEBI" id="CHEBI:29105"/>
        <note>catalytic</note>
    </ligand>
</feature>
<feature type="binding site" evidence="1">
    <location>
        <position position="343"/>
    </location>
    <ligand>
        <name>substrate</name>
    </ligand>
</feature>
<feature type="binding site" evidence="1">
    <location>
        <begin position="360"/>
        <end position="361"/>
    </location>
    <ligand>
        <name>substrate</name>
    </ligand>
</feature>
<feature type="binding site" evidence="5">
    <location>
        <position position="417"/>
    </location>
    <ligand>
        <name>Zn(2+)</name>
        <dbReference type="ChEBI" id="CHEBI:29105"/>
        <note>catalytic</note>
    </ligand>
</feature>
<feature type="binding site" evidence="1">
    <location>
        <begin position="418"/>
        <end position="419"/>
    </location>
    <ligand>
        <name>substrate</name>
    </ligand>
</feature>
<feature type="glycosylation site" description="N-linked (GlcNAc...) asparagine" evidence="4">
    <location>
        <position position="370"/>
    </location>
</feature>
<feature type="disulfide bond" evidence="2">
    <location>
        <begin position="354"/>
        <end position="377"/>
    </location>
</feature>
<evidence type="ECO:0000250" key="1">
    <source>
        <dbReference type="UniProtKB" id="P00730"/>
    </source>
</evidence>
<evidence type="ECO:0000250" key="2">
    <source>
        <dbReference type="UniProtKB" id="P15085"/>
    </source>
</evidence>
<evidence type="ECO:0000250" key="3">
    <source>
        <dbReference type="UniProtKB" id="P38836"/>
    </source>
</evidence>
<evidence type="ECO:0000255" key="4"/>
<evidence type="ECO:0000255" key="5">
    <source>
        <dbReference type="PROSITE-ProRule" id="PRU01379"/>
    </source>
</evidence>
<evidence type="ECO:0000256" key="6">
    <source>
        <dbReference type="SAM" id="MobiDB-lite"/>
    </source>
</evidence>
<evidence type="ECO:0000305" key="7"/>
<name>ECM14_TRIVH</name>
<proteinExistence type="inferred from homology"/>
<dbReference type="EMBL" id="ACYE01000415">
    <property type="protein sequence ID" value="EFE38215.1"/>
    <property type="molecule type" value="Genomic_DNA"/>
</dbReference>
<dbReference type="RefSeq" id="XP_003018860.1">
    <property type="nucleotide sequence ID" value="XM_003018814.1"/>
</dbReference>
<dbReference type="SMR" id="D4DIW7"/>
<dbReference type="GlyCosmos" id="D4DIW7">
    <property type="glycosylation" value="1 site, No reported glycans"/>
</dbReference>
<dbReference type="GeneID" id="9581504"/>
<dbReference type="KEGG" id="tve:TRV_07128"/>
<dbReference type="HOGENOM" id="CLU_019326_1_0_1"/>
<dbReference type="OrthoDB" id="3275at34384"/>
<dbReference type="Proteomes" id="UP000008383">
    <property type="component" value="Unassembled WGS sequence"/>
</dbReference>
<dbReference type="GO" id="GO:0005576">
    <property type="term" value="C:extracellular region"/>
    <property type="evidence" value="ECO:0007669"/>
    <property type="project" value="UniProtKB-SubCell"/>
</dbReference>
<dbReference type="GO" id="GO:0005773">
    <property type="term" value="C:vacuole"/>
    <property type="evidence" value="ECO:0007669"/>
    <property type="project" value="UniProtKB-SubCell"/>
</dbReference>
<dbReference type="GO" id="GO:0008270">
    <property type="term" value="F:zinc ion binding"/>
    <property type="evidence" value="ECO:0007669"/>
    <property type="project" value="InterPro"/>
</dbReference>
<dbReference type="GO" id="GO:0071555">
    <property type="term" value="P:cell wall organization"/>
    <property type="evidence" value="ECO:0007669"/>
    <property type="project" value="UniProtKB-KW"/>
</dbReference>
<dbReference type="GO" id="GO:0006508">
    <property type="term" value="P:proteolysis"/>
    <property type="evidence" value="ECO:0007669"/>
    <property type="project" value="InterPro"/>
</dbReference>
<dbReference type="CDD" id="cd03860">
    <property type="entry name" value="M14_CP_A-B_like"/>
    <property type="match status" value="1"/>
</dbReference>
<dbReference type="FunFam" id="3.40.630.10:FF:000060">
    <property type="entry name" value="Putative metallocarboxypeptidase ecm14"/>
    <property type="match status" value="1"/>
</dbReference>
<dbReference type="Gene3D" id="3.40.630.10">
    <property type="entry name" value="Zn peptidases"/>
    <property type="match status" value="1"/>
</dbReference>
<dbReference type="InterPro" id="IPR000834">
    <property type="entry name" value="Peptidase_M14"/>
</dbReference>
<dbReference type="PANTHER" id="PTHR11705:SF147">
    <property type="entry name" value="INACTIVE METALLOCARBOXYPEPTIDASE ECM14"/>
    <property type="match status" value="1"/>
</dbReference>
<dbReference type="PANTHER" id="PTHR11705">
    <property type="entry name" value="PROTEASE FAMILY M14 CARBOXYPEPTIDASE A,B"/>
    <property type="match status" value="1"/>
</dbReference>
<dbReference type="Pfam" id="PF00246">
    <property type="entry name" value="Peptidase_M14"/>
    <property type="match status" value="1"/>
</dbReference>
<dbReference type="PRINTS" id="PR00765">
    <property type="entry name" value="CRBOXYPTASEA"/>
</dbReference>
<dbReference type="SMART" id="SM00631">
    <property type="entry name" value="Zn_pept"/>
    <property type="match status" value="1"/>
</dbReference>
<dbReference type="SUPFAM" id="SSF53187">
    <property type="entry name" value="Zn-dependent exopeptidases"/>
    <property type="match status" value="1"/>
</dbReference>
<dbReference type="PROSITE" id="PS52035">
    <property type="entry name" value="PEPTIDASE_M14"/>
    <property type="match status" value="1"/>
</dbReference>
<organism>
    <name type="scientific">Trichophyton verrucosum (strain HKI 0517)</name>
    <dbReference type="NCBI Taxonomy" id="663202"/>
    <lineage>
        <taxon>Eukaryota</taxon>
        <taxon>Fungi</taxon>
        <taxon>Dikarya</taxon>
        <taxon>Ascomycota</taxon>
        <taxon>Pezizomycotina</taxon>
        <taxon>Eurotiomycetes</taxon>
        <taxon>Eurotiomycetidae</taxon>
        <taxon>Onygenales</taxon>
        <taxon>Arthrodermataceae</taxon>
        <taxon>Trichophyton</taxon>
    </lineage>
</organism>
<protein>
    <recommendedName>
        <fullName evidence="7">Inactive metallocarboxypeptidase ECM14</fullName>
    </recommendedName>
</protein>
<comment type="function">
    <text evidence="3">Inactive carboxypeptidase that may play a role in cell wall organization and biogenesis.</text>
</comment>
<comment type="cofactor">
    <cofactor evidence="1">
        <name>Zn(2+)</name>
        <dbReference type="ChEBI" id="CHEBI:29105"/>
    </cofactor>
    <text evidence="1">Binds 1 zinc ion per subunit.</text>
</comment>
<comment type="subcellular location">
    <subcellularLocation>
        <location evidence="3">Vacuole</location>
    </subcellularLocation>
    <subcellularLocation>
        <location evidence="3">Secreted</location>
    </subcellularLocation>
</comment>
<comment type="similarity">
    <text evidence="7">Belongs to the peptidase M14 family.</text>
</comment>
<comment type="caution">
    <text evidence="3">Lacks the conserved Glu residue in position 512 essential for carbopeptidase activity. The mature form lacks catalytic activity towards synthetic peptide substrates.</text>
</comment>
<gene>
    <name type="primary">ECM14</name>
    <name type="ORF">TRV_07128</name>
</gene>
<accession>D4DIW7</accession>